<feature type="chain" id="PRO_1000070924" description="Thymidylate synthase">
    <location>
        <begin position="1"/>
        <end position="283"/>
    </location>
</feature>
<feature type="active site" description="Nucleophile" evidence="1">
    <location>
        <position position="160"/>
    </location>
</feature>
<feature type="binding site" evidence="1">
    <location>
        <position position="22"/>
    </location>
    <ligand>
        <name>dUMP</name>
        <dbReference type="ChEBI" id="CHEBI:246422"/>
    </ligand>
</feature>
<feature type="binding site" evidence="1">
    <location>
        <begin position="180"/>
        <end position="183"/>
    </location>
    <ligand>
        <name>dUMP</name>
        <dbReference type="ChEBI" id="CHEBI:246422"/>
    </ligand>
</feature>
<feature type="binding site" evidence="1">
    <location>
        <position position="183"/>
    </location>
    <ligand>
        <name>(6R)-5,10-methylene-5,6,7,8-tetrahydrofolate</name>
        <dbReference type="ChEBI" id="CHEBI:15636"/>
    </ligand>
</feature>
<feature type="binding site" evidence="1">
    <location>
        <position position="191"/>
    </location>
    <ligand>
        <name>dUMP</name>
        <dbReference type="ChEBI" id="CHEBI:246422"/>
    </ligand>
</feature>
<feature type="binding site" evidence="1">
    <location>
        <begin position="221"/>
        <end position="223"/>
    </location>
    <ligand>
        <name>dUMP</name>
        <dbReference type="ChEBI" id="CHEBI:246422"/>
    </ligand>
</feature>
<feature type="binding site" evidence="1">
    <location>
        <position position="282"/>
    </location>
    <ligand>
        <name>(6R)-5,10-methylene-5,6,7,8-tetrahydrofolate</name>
        <dbReference type="ChEBI" id="CHEBI:15636"/>
    </ligand>
</feature>
<accession>A6VMA0</accession>
<protein>
    <recommendedName>
        <fullName evidence="1">Thymidylate synthase</fullName>
        <shortName evidence="1">TS</shortName>
        <shortName evidence="1">TSase</shortName>
        <ecNumber evidence="1">2.1.1.45</ecNumber>
    </recommendedName>
</protein>
<name>TYSY_ACTSZ</name>
<organism>
    <name type="scientific">Actinobacillus succinogenes (strain ATCC 55618 / DSM 22257 / CCUG 43843 / 130Z)</name>
    <dbReference type="NCBI Taxonomy" id="339671"/>
    <lineage>
        <taxon>Bacteria</taxon>
        <taxon>Pseudomonadati</taxon>
        <taxon>Pseudomonadota</taxon>
        <taxon>Gammaproteobacteria</taxon>
        <taxon>Pasteurellales</taxon>
        <taxon>Pasteurellaceae</taxon>
        <taxon>Actinobacillus</taxon>
    </lineage>
</organism>
<sequence>MRQYLDLCQRIVDEGVWLENQRTGKRCLTVINADLTYNAAANEFPIITTRKSYWKAAIAEFLGYIRGYDNAADFRKLGAKTWDANANENQAWLNNPVRKGVDDMGRVYGVQGRAWRKPNGETVDQLRKIVDDLSRGIDDRGEILTFLNPGEFDLGCLRPCMYSHTFSLLGDTLYLTSYQRSCDVPLGLNFNQIQVFTFLALMAQITGKKPGQAYHKIVNAHIYEDQLDLMRDVQLKRRPFPSPRLEINPDIKTLEDLETWVTLDDFNVVGYECHEPIKYPFSV</sequence>
<evidence type="ECO:0000255" key="1">
    <source>
        <dbReference type="HAMAP-Rule" id="MF_00008"/>
    </source>
</evidence>
<reference key="1">
    <citation type="journal article" date="2010" name="BMC Genomics">
        <title>A genomic perspective on the potential of Actinobacillus succinogenes for industrial succinate production.</title>
        <authorList>
            <person name="McKinlay J.B."/>
            <person name="Laivenieks M."/>
            <person name="Schindler B.D."/>
            <person name="McKinlay A.A."/>
            <person name="Siddaramappa S."/>
            <person name="Challacombe J.F."/>
            <person name="Lowry S.R."/>
            <person name="Clum A."/>
            <person name="Lapidus A.L."/>
            <person name="Burkhart K.B."/>
            <person name="Harkins V."/>
            <person name="Vieille C."/>
        </authorList>
    </citation>
    <scope>NUCLEOTIDE SEQUENCE [LARGE SCALE GENOMIC DNA]</scope>
    <source>
        <strain>ATCC 55618 / DSM 22257 / CCUG 43843 / 130Z</strain>
    </source>
</reference>
<keyword id="KW-0963">Cytoplasm</keyword>
<keyword id="KW-0489">Methyltransferase</keyword>
<keyword id="KW-0545">Nucleotide biosynthesis</keyword>
<keyword id="KW-1185">Reference proteome</keyword>
<keyword id="KW-0808">Transferase</keyword>
<dbReference type="EC" id="2.1.1.45" evidence="1"/>
<dbReference type="EMBL" id="CP000746">
    <property type="protein sequence ID" value="ABR74097.1"/>
    <property type="molecule type" value="Genomic_DNA"/>
</dbReference>
<dbReference type="RefSeq" id="WP_012072476.1">
    <property type="nucleotide sequence ID" value="NC_009655.1"/>
</dbReference>
<dbReference type="SMR" id="A6VMA0"/>
<dbReference type="STRING" id="339671.Asuc_0725"/>
<dbReference type="KEGG" id="asu:Asuc_0725"/>
<dbReference type="eggNOG" id="COG0207">
    <property type="taxonomic scope" value="Bacteria"/>
</dbReference>
<dbReference type="HOGENOM" id="CLU_021669_0_1_6"/>
<dbReference type="OrthoDB" id="9774633at2"/>
<dbReference type="UniPathway" id="UPA00575"/>
<dbReference type="Proteomes" id="UP000001114">
    <property type="component" value="Chromosome"/>
</dbReference>
<dbReference type="GO" id="GO:0005829">
    <property type="term" value="C:cytosol"/>
    <property type="evidence" value="ECO:0007669"/>
    <property type="project" value="TreeGrafter"/>
</dbReference>
<dbReference type="GO" id="GO:0004799">
    <property type="term" value="F:thymidylate synthase activity"/>
    <property type="evidence" value="ECO:0007669"/>
    <property type="project" value="UniProtKB-UniRule"/>
</dbReference>
<dbReference type="GO" id="GO:0006231">
    <property type="term" value="P:dTMP biosynthetic process"/>
    <property type="evidence" value="ECO:0007669"/>
    <property type="project" value="UniProtKB-UniRule"/>
</dbReference>
<dbReference type="GO" id="GO:0006235">
    <property type="term" value="P:dTTP biosynthetic process"/>
    <property type="evidence" value="ECO:0007669"/>
    <property type="project" value="UniProtKB-UniRule"/>
</dbReference>
<dbReference type="GO" id="GO:0032259">
    <property type="term" value="P:methylation"/>
    <property type="evidence" value="ECO:0007669"/>
    <property type="project" value="UniProtKB-KW"/>
</dbReference>
<dbReference type="CDD" id="cd00351">
    <property type="entry name" value="TS_Pyrimidine_HMase"/>
    <property type="match status" value="1"/>
</dbReference>
<dbReference type="Gene3D" id="3.30.572.10">
    <property type="entry name" value="Thymidylate synthase/dCMP hydroxymethylase domain"/>
    <property type="match status" value="1"/>
</dbReference>
<dbReference type="HAMAP" id="MF_00008">
    <property type="entry name" value="Thymidy_synth_bact"/>
    <property type="match status" value="1"/>
</dbReference>
<dbReference type="InterPro" id="IPR045097">
    <property type="entry name" value="Thymidate_synth/dCMP_Mease"/>
</dbReference>
<dbReference type="InterPro" id="IPR023451">
    <property type="entry name" value="Thymidate_synth/dCMP_Mease_dom"/>
</dbReference>
<dbReference type="InterPro" id="IPR036926">
    <property type="entry name" value="Thymidate_synth/dCMP_Mease_sf"/>
</dbReference>
<dbReference type="InterPro" id="IPR000398">
    <property type="entry name" value="Thymidylate_synthase"/>
</dbReference>
<dbReference type="NCBIfam" id="NF002498">
    <property type="entry name" value="PRK01827.1-4"/>
    <property type="match status" value="1"/>
</dbReference>
<dbReference type="NCBIfam" id="TIGR03284">
    <property type="entry name" value="thym_sym"/>
    <property type="match status" value="1"/>
</dbReference>
<dbReference type="PANTHER" id="PTHR11548:SF9">
    <property type="entry name" value="THYMIDYLATE SYNTHASE"/>
    <property type="match status" value="1"/>
</dbReference>
<dbReference type="PANTHER" id="PTHR11548">
    <property type="entry name" value="THYMIDYLATE SYNTHASE 1"/>
    <property type="match status" value="1"/>
</dbReference>
<dbReference type="Pfam" id="PF00303">
    <property type="entry name" value="Thymidylat_synt"/>
    <property type="match status" value="1"/>
</dbReference>
<dbReference type="PRINTS" id="PR00108">
    <property type="entry name" value="THYMDSNTHASE"/>
</dbReference>
<dbReference type="SUPFAM" id="SSF55831">
    <property type="entry name" value="Thymidylate synthase/dCMP hydroxymethylase"/>
    <property type="match status" value="1"/>
</dbReference>
<gene>
    <name evidence="1" type="primary">thyA</name>
    <name type="ordered locus">Asuc_0725</name>
</gene>
<proteinExistence type="inferred from homology"/>
<comment type="function">
    <text evidence="1">Catalyzes the reductive methylation of 2'-deoxyuridine-5'-monophosphate (dUMP) to 2'-deoxythymidine-5'-monophosphate (dTMP) while utilizing 5,10-methylenetetrahydrofolate (mTHF) as the methyl donor and reductant in the reaction, yielding dihydrofolate (DHF) as a by-product. This enzymatic reaction provides an intracellular de novo source of dTMP, an essential precursor for DNA biosynthesis.</text>
</comment>
<comment type="catalytic activity">
    <reaction evidence="1">
        <text>dUMP + (6R)-5,10-methylene-5,6,7,8-tetrahydrofolate = 7,8-dihydrofolate + dTMP</text>
        <dbReference type="Rhea" id="RHEA:12104"/>
        <dbReference type="ChEBI" id="CHEBI:15636"/>
        <dbReference type="ChEBI" id="CHEBI:57451"/>
        <dbReference type="ChEBI" id="CHEBI:63528"/>
        <dbReference type="ChEBI" id="CHEBI:246422"/>
        <dbReference type="EC" id="2.1.1.45"/>
    </reaction>
</comment>
<comment type="pathway">
    <text evidence="1">Pyrimidine metabolism; dTTP biosynthesis.</text>
</comment>
<comment type="subunit">
    <text evidence="1">Homodimer.</text>
</comment>
<comment type="subcellular location">
    <subcellularLocation>
        <location evidence="1">Cytoplasm</location>
    </subcellularLocation>
</comment>
<comment type="similarity">
    <text evidence="1">Belongs to the thymidylate synthase family. Bacterial-type ThyA subfamily.</text>
</comment>